<dbReference type="EC" id="2.3.1.-" evidence="3 4"/>
<dbReference type="EMBL" id="AM040265">
    <property type="protein sequence ID" value="CAJ12914.1"/>
    <property type="molecule type" value="Genomic_DNA"/>
</dbReference>
<dbReference type="RefSeq" id="WP_002966140.1">
    <property type="nucleotide sequence ID" value="NZ_KN046823.1"/>
</dbReference>
<dbReference type="SMR" id="Q2YKB4"/>
<dbReference type="STRING" id="359391.BAB2_0748"/>
<dbReference type="KEGG" id="bmf:BAB2_0748"/>
<dbReference type="PATRIC" id="fig|359391.11.peg.441"/>
<dbReference type="HOGENOM" id="CLU_039592_4_2_5"/>
<dbReference type="PhylomeDB" id="Q2YKB4"/>
<dbReference type="UniPathway" id="UPA00078"/>
<dbReference type="Proteomes" id="UP000002719">
    <property type="component" value="Chromosome II"/>
</dbReference>
<dbReference type="GO" id="GO:0004315">
    <property type="term" value="F:3-oxoacyl-[acyl-carrier-protein] synthase activity"/>
    <property type="evidence" value="ECO:0007669"/>
    <property type="project" value="UniProtKB-EC"/>
</dbReference>
<dbReference type="GO" id="GO:0009102">
    <property type="term" value="P:biotin biosynthetic process"/>
    <property type="evidence" value="ECO:0007669"/>
    <property type="project" value="UniProtKB-UniRule"/>
</dbReference>
<dbReference type="GO" id="GO:0006633">
    <property type="term" value="P:fatty acid biosynthetic process"/>
    <property type="evidence" value="ECO:0007669"/>
    <property type="project" value="InterPro"/>
</dbReference>
<dbReference type="GO" id="GO:0044550">
    <property type="term" value="P:secondary metabolite biosynthetic process"/>
    <property type="evidence" value="ECO:0007669"/>
    <property type="project" value="TreeGrafter"/>
</dbReference>
<dbReference type="CDD" id="cd00830">
    <property type="entry name" value="KAS_III"/>
    <property type="match status" value="1"/>
</dbReference>
<dbReference type="Gene3D" id="3.40.47.10">
    <property type="match status" value="1"/>
</dbReference>
<dbReference type="HAMAP" id="MF_02249">
    <property type="entry name" value="BioZ"/>
    <property type="match status" value="1"/>
</dbReference>
<dbReference type="InterPro" id="IPR013747">
    <property type="entry name" value="ACP_syn_III_C"/>
</dbReference>
<dbReference type="InterPro" id="IPR013751">
    <property type="entry name" value="ACP_syn_III_N"/>
</dbReference>
<dbReference type="InterPro" id="IPR046403">
    <property type="entry name" value="BioZ"/>
</dbReference>
<dbReference type="InterPro" id="IPR016039">
    <property type="entry name" value="Thiolase-like"/>
</dbReference>
<dbReference type="NCBIfam" id="NF004623">
    <property type="entry name" value="PRK05963.1"/>
    <property type="match status" value="1"/>
</dbReference>
<dbReference type="NCBIfam" id="NF006829">
    <property type="entry name" value="PRK09352.1"/>
    <property type="match status" value="1"/>
</dbReference>
<dbReference type="PANTHER" id="PTHR34069">
    <property type="entry name" value="3-OXOACYL-[ACYL-CARRIER-PROTEIN] SYNTHASE 3"/>
    <property type="match status" value="1"/>
</dbReference>
<dbReference type="PANTHER" id="PTHR34069:SF2">
    <property type="entry name" value="BETA-KETOACYL-[ACYL-CARRIER-PROTEIN] SYNTHASE III"/>
    <property type="match status" value="1"/>
</dbReference>
<dbReference type="Pfam" id="PF08545">
    <property type="entry name" value="ACP_syn_III"/>
    <property type="match status" value="1"/>
</dbReference>
<dbReference type="Pfam" id="PF08541">
    <property type="entry name" value="ACP_syn_III_C"/>
    <property type="match status" value="1"/>
</dbReference>
<dbReference type="SUPFAM" id="SSF53901">
    <property type="entry name" value="Thiolase-like"/>
    <property type="match status" value="1"/>
</dbReference>
<feature type="chain" id="PRO_0000453631" description="3-oxopimeloyl-[acyl-carrier-protein] synthase">
    <location>
        <begin position="1"/>
        <end position="326"/>
    </location>
</feature>
<feature type="region of interest" description="ACP-binding" evidence="1 3">
    <location>
        <begin position="254"/>
        <end position="258"/>
    </location>
</feature>
<feature type="active site" evidence="2 3">
    <location>
        <position position="115"/>
    </location>
</feature>
<feature type="active site" evidence="2 3">
    <location>
        <position position="253"/>
    </location>
</feature>
<feature type="active site" evidence="2 3">
    <location>
        <position position="283"/>
    </location>
</feature>
<organism>
    <name type="scientific">Brucella abortus (strain 2308)</name>
    <dbReference type="NCBI Taxonomy" id="359391"/>
    <lineage>
        <taxon>Bacteria</taxon>
        <taxon>Pseudomonadati</taxon>
        <taxon>Pseudomonadota</taxon>
        <taxon>Alphaproteobacteria</taxon>
        <taxon>Hyphomicrobiales</taxon>
        <taxon>Brucellaceae</taxon>
        <taxon>Brucella/Ochrobactrum group</taxon>
        <taxon>Brucella</taxon>
    </lineage>
</organism>
<accession>Q2YKB4</accession>
<protein>
    <recommendedName>
        <fullName evidence="3 5">3-oxopimeloyl-[acyl-carrier-protein] synthase</fullName>
        <shortName evidence="3 5">3-oxopimeloyl-[ACP] synthase</shortName>
        <ecNumber evidence="3 4">2.3.1.-</ecNumber>
    </recommendedName>
</protein>
<sequence length="326" mass="34341">MTVCSSRLAGFGHAVPDRRVENAEIEAQLGLETGWIERRTGIRCRRWAMPDETLSHLAASAADMALSDAGIERSDIALTLLATSTPDHLLPPTAPLLTHWLNLQNSGAADLAGACTGFLYALVLADGFVRAQGKPVLVVAANLLSRRINMAERASAVLFGDAAGAVVLAPSAKANSFQSQFITNGSHYDLIKVPAGGSARAYAPERDASEFLMTMQDGRAVFTEAVRIMSGASQNVLASAAMLPQAIDRFFPHQANIRIVDKVCETIGVPRAKAASTLETYGNSSAATIPLSLSLANLEQPLREGERLLFAAAGAGMTGGAVLMQV</sequence>
<reference key="1">
    <citation type="journal article" date="2005" name="Infect. Immun.">
        <title>Whole-genome analyses of speciation events in pathogenic Brucellae.</title>
        <authorList>
            <person name="Chain P.S."/>
            <person name="Comerci D.J."/>
            <person name="Tolmasky M.E."/>
            <person name="Larimer F.W."/>
            <person name="Malfatti S.A."/>
            <person name="Vergez L.M."/>
            <person name="Aguero F."/>
            <person name="Land M.L."/>
            <person name="Ugalde R.A."/>
            <person name="Garcia E."/>
        </authorList>
    </citation>
    <scope>NUCLEOTIDE SEQUENCE [LARGE SCALE GENOMIC DNA]</scope>
    <source>
        <strain>2308</strain>
    </source>
</reference>
<reference key="2">
    <citation type="journal article" date="2020" name="Nat. Commun.">
        <title>Alpha-proteobacteria synthesize biotin precursor pimeloyl-ACP using BioZ 3-ketoacyl-ACP synthase and lysine catabolism.</title>
        <authorList>
            <person name="Hu Y."/>
            <person name="Cronan J.E."/>
        </authorList>
    </citation>
    <scope>FUNCTION</scope>
    <scope>CATALYTIC ACTIVITY</scope>
    <scope>PATHWAY</scope>
</reference>
<evidence type="ECO:0000250" key="1">
    <source>
        <dbReference type="UniProtKB" id="P0A6R0"/>
    </source>
</evidence>
<evidence type="ECO:0000250" key="2">
    <source>
        <dbReference type="UniProtKB" id="Q7CTU0"/>
    </source>
</evidence>
<evidence type="ECO:0000255" key="3">
    <source>
        <dbReference type="HAMAP-Rule" id="MF_02249"/>
    </source>
</evidence>
<evidence type="ECO:0000269" key="4">
    <source>
    </source>
</evidence>
<evidence type="ECO:0000305" key="5"/>
<evidence type="ECO:0000312" key="6">
    <source>
        <dbReference type="EMBL" id="CAJ12914.1"/>
    </source>
</evidence>
<name>BIOZ_BRUA2</name>
<comment type="function">
    <text evidence="4">Involved in the formation of the biotin precursor pimeloyl-ACP (PubMed:33154364). Catalyzes the condensation of glutaryl-CoA, an intermediate in lysine degradation, with malonyl-ACP to produce 3-oxopimeloyl-ACP (PubMed:33154364).</text>
</comment>
<comment type="catalytic activity">
    <reaction evidence="3 4">
        <text>malonyl-[ACP] + an acyl-CoA + H(+) = a 3-oxoacyl-[ACP] + CO2 + CoA</text>
        <dbReference type="Rhea" id="RHEA:44448"/>
        <dbReference type="Rhea" id="RHEA-COMP:9623"/>
        <dbReference type="Rhea" id="RHEA-COMP:9916"/>
        <dbReference type="ChEBI" id="CHEBI:15378"/>
        <dbReference type="ChEBI" id="CHEBI:16526"/>
        <dbReference type="ChEBI" id="CHEBI:57287"/>
        <dbReference type="ChEBI" id="CHEBI:58342"/>
        <dbReference type="ChEBI" id="CHEBI:78449"/>
        <dbReference type="ChEBI" id="CHEBI:78776"/>
    </reaction>
</comment>
<comment type="catalytic activity">
    <reaction evidence="3 4">
        <text>glutaryl-CoA + malonyl-[ACP] + H(+) = 3-oxo-6-carboxyhexanoyl-[ACP] + CO2 + CoA</text>
        <dbReference type="Rhea" id="RHEA:67904"/>
        <dbReference type="Rhea" id="RHEA-COMP:9623"/>
        <dbReference type="Rhea" id="RHEA-COMP:17387"/>
        <dbReference type="ChEBI" id="CHEBI:15378"/>
        <dbReference type="ChEBI" id="CHEBI:16526"/>
        <dbReference type="ChEBI" id="CHEBI:57287"/>
        <dbReference type="ChEBI" id="CHEBI:57378"/>
        <dbReference type="ChEBI" id="CHEBI:78449"/>
        <dbReference type="ChEBI" id="CHEBI:176519"/>
    </reaction>
</comment>
<comment type="pathway">
    <text evidence="3 4">Cofactor biosynthesis; biotin biosynthesis.</text>
</comment>
<comment type="similarity">
    <text evidence="3 5">Belongs to the thiolase-like superfamily. BioZ family.</text>
</comment>
<gene>
    <name evidence="3" type="primary">bioZ</name>
    <name evidence="6" type="ordered locus">BAB2_0748</name>
</gene>
<keyword id="KW-0012">Acyltransferase</keyword>
<keyword id="KW-0093">Biotin biosynthesis</keyword>
<keyword id="KW-1185">Reference proteome</keyword>
<keyword id="KW-0808">Transferase</keyword>
<proteinExistence type="evidence at protein level"/>